<proteinExistence type="inferred from homology"/>
<keyword id="KW-0963">Cytoplasm</keyword>
<keyword id="KW-0489">Methyltransferase</keyword>
<keyword id="KW-0698">rRNA processing</keyword>
<keyword id="KW-0949">S-adenosyl-L-methionine</keyword>
<keyword id="KW-0808">Transferase</keyword>
<comment type="function">
    <text evidence="1">Specifically methylates the N4 position of cytidine in position 1402 (C1402) of 16S rRNA.</text>
</comment>
<comment type="catalytic activity">
    <reaction evidence="1">
        <text>cytidine(1402) in 16S rRNA + S-adenosyl-L-methionine = N(4)-methylcytidine(1402) in 16S rRNA + S-adenosyl-L-homocysteine + H(+)</text>
        <dbReference type="Rhea" id="RHEA:42928"/>
        <dbReference type="Rhea" id="RHEA-COMP:10286"/>
        <dbReference type="Rhea" id="RHEA-COMP:10287"/>
        <dbReference type="ChEBI" id="CHEBI:15378"/>
        <dbReference type="ChEBI" id="CHEBI:57856"/>
        <dbReference type="ChEBI" id="CHEBI:59789"/>
        <dbReference type="ChEBI" id="CHEBI:74506"/>
        <dbReference type="ChEBI" id="CHEBI:82748"/>
        <dbReference type="EC" id="2.1.1.199"/>
    </reaction>
</comment>
<comment type="subcellular location">
    <subcellularLocation>
        <location evidence="1">Cytoplasm</location>
    </subcellularLocation>
</comment>
<comment type="similarity">
    <text evidence="1">Belongs to the methyltransferase superfamily. RsmH family.</text>
</comment>
<gene>
    <name evidence="1" type="primary">rsmH</name>
    <name type="synonym">mraW</name>
    <name type="ordered locus">BRE_313</name>
</gene>
<sequence>MGDIFHIPVLLEDVINLVETIYLDDGFVFVDCTLGEGGHSKAVLSKYQNINVIGIERDDVVLNRAKESLVEFSKRISYSNTWFDDFFCKYSLHRRFNFILADLGISMFHYKVAGRGFSFLEDEKLDMRLFPSDGGISAYDIVNTFDKEMLENLIYELGGEYYSRRIVKAILEYRKINKIQTSRELQRIICKAYPNVKFKINPATKTFQALRIYVNDELDRLKRSLPLWIANLSKNGILAIITFHSLEDKIVKEFFKGLTKDKYCILTKKPITSSFKEKQYNNASRSAKLRAVKKLYE</sequence>
<reference key="1">
    <citation type="journal article" date="2008" name="PLoS Genet.">
        <title>The genome of Borrelia recurrentis, the agent of deadly louse-borne relapsing fever, is a degraded subset of tick-borne Borrelia duttonii.</title>
        <authorList>
            <person name="Lescot M."/>
            <person name="Audic S."/>
            <person name="Robert C."/>
            <person name="Nguyen T.T."/>
            <person name="Blanc G."/>
            <person name="Cutler S.J."/>
            <person name="Wincker P."/>
            <person name="Couloux A."/>
            <person name="Claverie J.-M."/>
            <person name="Raoult D."/>
            <person name="Drancourt M."/>
        </authorList>
    </citation>
    <scope>NUCLEOTIDE SEQUENCE [LARGE SCALE GENOMIC DNA]</scope>
    <source>
        <strain>A1</strain>
    </source>
</reference>
<feature type="chain" id="PRO_0000386755" description="Ribosomal RNA small subunit methyltransferase H">
    <location>
        <begin position="1"/>
        <end position="297"/>
    </location>
</feature>
<feature type="binding site" evidence="1">
    <location>
        <begin position="37"/>
        <end position="39"/>
    </location>
    <ligand>
        <name>S-adenosyl-L-methionine</name>
        <dbReference type="ChEBI" id="CHEBI:59789"/>
    </ligand>
</feature>
<feature type="binding site" evidence="1">
    <location>
        <position position="56"/>
    </location>
    <ligand>
        <name>S-adenosyl-L-methionine</name>
        <dbReference type="ChEBI" id="CHEBI:59789"/>
    </ligand>
</feature>
<feature type="binding site" evidence="1">
    <location>
        <position position="87"/>
    </location>
    <ligand>
        <name>S-adenosyl-L-methionine</name>
        <dbReference type="ChEBI" id="CHEBI:59789"/>
    </ligand>
</feature>
<feature type="binding site" evidence="1">
    <location>
        <position position="102"/>
    </location>
    <ligand>
        <name>S-adenosyl-L-methionine</name>
        <dbReference type="ChEBI" id="CHEBI:59789"/>
    </ligand>
</feature>
<feature type="binding site" evidence="1">
    <location>
        <position position="109"/>
    </location>
    <ligand>
        <name>S-adenosyl-L-methionine</name>
        <dbReference type="ChEBI" id="CHEBI:59789"/>
    </ligand>
</feature>
<evidence type="ECO:0000255" key="1">
    <source>
        <dbReference type="HAMAP-Rule" id="MF_01007"/>
    </source>
</evidence>
<organism>
    <name type="scientific">Borrelia recurrentis (strain A1)</name>
    <dbReference type="NCBI Taxonomy" id="412418"/>
    <lineage>
        <taxon>Bacteria</taxon>
        <taxon>Pseudomonadati</taxon>
        <taxon>Spirochaetota</taxon>
        <taxon>Spirochaetia</taxon>
        <taxon>Spirochaetales</taxon>
        <taxon>Borreliaceae</taxon>
        <taxon>Borrelia</taxon>
    </lineage>
</organism>
<protein>
    <recommendedName>
        <fullName evidence="1">Ribosomal RNA small subunit methyltransferase H</fullName>
        <ecNumber evidence="1">2.1.1.199</ecNumber>
    </recommendedName>
    <alternativeName>
        <fullName evidence="1">16S rRNA m(4)C1402 methyltransferase</fullName>
    </alternativeName>
    <alternativeName>
        <fullName evidence="1">rRNA (cytosine-N(4)-)-methyltransferase RsmH</fullName>
    </alternativeName>
</protein>
<dbReference type="EC" id="2.1.1.199" evidence="1"/>
<dbReference type="EMBL" id="CP000993">
    <property type="protein sequence ID" value="ACH94559.1"/>
    <property type="molecule type" value="Genomic_DNA"/>
</dbReference>
<dbReference type="RefSeq" id="WP_012538811.1">
    <property type="nucleotide sequence ID" value="NC_011244.1"/>
</dbReference>
<dbReference type="SMR" id="B5RRC5"/>
<dbReference type="KEGG" id="bre:BRE_313"/>
<dbReference type="HOGENOM" id="CLU_038422_3_0_12"/>
<dbReference type="Proteomes" id="UP000000612">
    <property type="component" value="Chromosome"/>
</dbReference>
<dbReference type="GO" id="GO:0005737">
    <property type="term" value="C:cytoplasm"/>
    <property type="evidence" value="ECO:0007669"/>
    <property type="project" value="UniProtKB-SubCell"/>
</dbReference>
<dbReference type="GO" id="GO:0071424">
    <property type="term" value="F:rRNA (cytosine-N4-)-methyltransferase activity"/>
    <property type="evidence" value="ECO:0007669"/>
    <property type="project" value="UniProtKB-UniRule"/>
</dbReference>
<dbReference type="GO" id="GO:0070475">
    <property type="term" value="P:rRNA base methylation"/>
    <property type="evidence" value="ECO:0007669"/>
    <property type="project" value="UniProtKB-UniRule"/>
</dbReference>
<dbReference type="Gene3D" id="1.10.150.170">
    <property type="entry name" value="Putative methyltransferase TM0872, insert domain"/>
    <property type="match status" value="1"/>
</dbReference>
<dbReference type="Gene3D" id="3.40.50.150">
    <property type="entry name" value="Vaccinia Virus protein VP39"/>
    <property type="match status" value="1"/>
</dbReference>
<dbReference type="HAMAP" id="MF_01007">
    <property type="entry name" value="16SrRNA_methyltr_H"/>
    <property type="match status" value="1"/>
</dbReference>
<dbReference type="InterPro" id="IPR002903">
    <property type="entry name" value="RsmH"/>
</dbReference>
<dbReference type="InterPro" id="IPR023397">
    <property type="entry name" value="SAM-dep_MeTrfase_MraW_recog"/>
</dbReference>
<dbReference type="InterPro" id="IPR029063">
    <property type="entry name" value="SAM-dependent_MTases_sf"/>
</dbReference>
<dbReference type="NCBIfam" id="TIGR00006">
    <property type="entry name" value="16S rRNA (cytosine(1402)-N(4))-methyltransferase RsmH"/>
    <property type="match status" value="1"/>
</dbReference>
<dbReference type="PANTHER" id="PTHR11265:SF0">
    <property type="entry name" value="12S RRNA N4-METHYLCYTIDINE METHYLTRANSFERASE"/>
    <property type="match status" value="1"/>
</dbReference>
<dbReference type="PANTHER" id="PTHR11265">
    <property type="entry name" value="S-ADENOSYL-METHYLTRANSFERASE MRAW"/>
    <property type="match status" value="1"/>
</dbReference>
<dbReference type="Pfam" id="PF01795">
    <property type="entry name" value="Methyltransf_5"/>
    <property type="match status" value="1"/>
</dbReference>
<dbReference type="PIRSF" id="PIRSF004486">
    <property type="entry name" value="MraW"/>
    <property type="match status" value="1"/>
</dbReference>
<dbReference type="SUPFAM" id="SSF81799">
    <property type="entry name" value="Putative methyltransferase TM0872, insert domain"/>
    <property type="match status" value="1"/>
</dbReference>
<dbReference type="SUPFAM" id="SSF53335">
    <property type="entry name" value="S-adenosyl-L-methionine-dependent methyltransferases"/>
    <property type="match status" value="1"/>
</dbReference>
<name>RSMH_BORRA</name>
<accession>B5RRC5</accession>